<comment type="function">
    <text evidence="1">Catalyzes the interconversion of beta-pyran and beta-furan forms of D-ribose.</text>
</comment>
<comment type="catalytic activity">
    <reaction evidence="1">
        <text>beta-D-ribopyranose = beta-D-ribofuranose</text>
        <dbReference type="Rhea" id="RHEA:25432"/>
        <dbReference type="ChEBI" id="CHEBI:27476"/>
        <dbReference type="ChEBI" id="CHEBI:47002"/>
        <dbReference type="EC" id="5.4.99.62"/>
    </reaction>
</comment>
<comment type="pathway">
    <text evidence="1">Carbohydrate metabolism; D-ribose degradation; D-ribose 5-phosphate from beta-D-ribopyranose: step 1/2.</text>
</comment>
<comment type="subunit">
    <text evidence="1">Homodecamer.</text>
</comment>
<comment type="subcellular location">
    <subcellularLocation>
        <location evidence="1">Cytoplasm</location>
    </subcellularLocation>
</comment>
<comment type="similarity">
    <text evidence="1">Belongs to the RbsD / FucU family. RbsD subfamily.</text>
</comment>
<reference key="1">
    <citation type="submission" date="2008-06" db="EMBL/GenBank/DDBJ databases">
        <title>Genome and proteome analysis of A. pleuropneumoniae serotype 7.</title>
        <authorList>
            <person name="Linke B."/>
            <person name="Buettner F."/>
            <person name="Martinez-Arias R."/>
            <person name="Goesmann A."/>
            <person name="Baltes N."/>
            <person name="Tegetmeyer H."/>
            <person name="Singh M."/>
            <person name="Gerlach G.F."/>
        </authorList>
    </citation>
    <scope>NUCLEOTIDE SEQUENCE [LARGE SCALE GENOMIC DNA]</scope>
    <source>
        <strain>AP76</strain>
    </source>
</reference>
<sequence length="139" mass="15212">MKKTAVLNAQLSGVIASLGHTDGLTICDAGLPIPSEQQCVDLALTKGIPSFLSTLEVVLTELFVERILLAEEIKQANPTIEQQLLEMINKLAQTQGRQIEIEYVVHSEFKQRSNQAKAVVRTGECSPYANVILYSGVPF</sequence>
<protein>
    <recommendedName>
        <fullName evidence="1">D-ribose pyranase</fullName>
        <ecNumber evidence="1">5.4.99.62</ecNumber>
    </recommendedName>
</protein>
<organism>
    <name type="scientific">Actinobacillus pleuropneumoniae serotype 7 (strain AP76)</name>
    <dbReference type="NCBI Taxonomy" id="537457"/>
    <lineage>
        <taxon>Bacteria</taxon>
        <taxon>Pseudomonadati</taxon>
        <taxon>Pseudomonadota</taxon>
        <taxon>Gammaproteobacteria</taxon>
        <taxon>Pasteurellales</taxon>
        <taxon>Pasteurellaceae</taxon>
        <taxon>Actinobacillus</taxon>
    </lineage>
</organism>
<gene>
    <name evidence="1" type="primary">rbsD</name>
    <name type="ordered locus">APP7_1729</name>
</gene>
<feature type="chain" id="PRO_1000187126" description="D-ribose pyranase">
    <location>
        <begin position="1"/>
        <end position="139"/>
    </location>
</feature>
<feature type="active site" description="Proton donor" evidence="1">
    <location>
        <position position="20"/>
    </location>
</feature>
<feature type="binding site" evidence="1">
    <location>
        <position position="28"/>
    </location>
    <ligand>
        <name>substrate</name>
    </ligand>
</feature>
<feature type="binding site" evidence="1">
    <location>
        <position position="106"/>
    </location>
    <ligand>
        <name>substrate</name>
    </ligand>
</feature>
<feature type="binding site" evidence="1">
    <location>
        <begin position="128"/>
        <end position="130"/>
    </location>
    <ligand>
        <name>substrate</name>
    </ligand>
</feature>
<evidence type="ECO:0000255" key="1">
    <source>
        <dbReference type="HAMAP-Rule" id="MF_01661"/>
    </source>
</evidence>
<proteinExistence type="inferred from homology"/>
<accession>B3H2R4</accession>
<dbReference type="EC" id="5.4.99.62" evidence="1"/>
<dbReference type="EMBL" id="CP001091">
    <property type="protein sequence ID" value="ACE62381.1"/>
    <property type="molecule type" value="Genomic_DNA"/>
</dbReference>
<dbReference type="RefSeq" id="WP_005599106.1">
    <property type="nucleotide sequence ID" value="NC_010939.1"/>
</dbReference>
<dbReference type="SMR" id="B3H2R4"/>
<dbReference type="GeneID" id="48599957"/>
<dbReference type="KEGG" id="apa:APP7_1729"/>
<dbReference type="HOGENOM" id="CLU_135498_0_0_6"/>
<dbReference type="UniPathway" id="UPA00916">
    <property type="reaction ID" value="UER00888"/>
</dbReference>
<dbReference type="Proteomes" id="UP000001226">
    <property type="component" value="Chromosome"/>
</dbReference>
<dbReference type="GO" id="GO:0005829">
    <property type="term" value="C:cytosol"/>
    <property type="evidence" value="ECO:0007669"/>
    <property type="project" value="TreeGrafter"/>
</dbReference>
<dbReference type="GO" id="GO:0062193">
    <property type="term" value="F:D-ribose pyranase activity"/>
    <property type="evidence" value="ECO:0007669"/>
    <property type="project" value="UniProtKB-EC"/>
</dbReference>
<dbReference type="GO" id="GO:0016872">
    <property type="term" value="F:intramolecular lyase activity"/>
    <property type="evidence" value="ECO:0007669"/>
    <property type="project" value="UniProtKB-UniRule"/>
</dbReference>
<dbReference type="GO" id="GO:0048029">
    <property type="term" value="F:monosaccharide binding"/>
    <property type="evidence" value="ECO:0007669"/>
    <property type="project" value="InterPro"/>
</dbReference>
<dbReference type="GO" id="GO:0019303">
    <property type="term" value="P:D-ribose catabolic process"/>
    <property type="evidence" value="ECO:0007669"/>
    <property type="project" value="UniProtKB-UniRule"/>
</dbReference>
<dbReference type="Gene3D" id="3.40.1650.10">
    <property type="entry name" value="RbsD-like domain"/>
    <property type="match status" value="1"/>
</dbReference>
<dbReference type="HAMAP" id="MF_01661">
    <property type="entry name" value="D_rib_pyranase"/>
    <property type="match status" value="1"/>
</dbReference>
<dbReference type="InterPro" id="IPR023064">
    <property type="entry name" value="D-ribose_pyranase"/>
</dbReference>
<dbReference type="InterPro" id="IPR023750">
    <property type="entry name" value="RbsD-like_sf"/>
</dbReference>
<dbReference type="InterPro" id="IPR007721">
    <property type="entry name" value="RbsD_FucU"/>
</dbReference>
<dbReference type="NCBIfam" id="NF008761">
    <property type="entry name" value="PRK11797.1"/>
    <property type="match status" value="1"/>
</dbReference>
<dbReference type="PANTHER" id="PTHR37831">
    <property type="entry name" value="D-RIBOSE PYRANASE"/>
    <property type="match status" value="1"/>
</dbReference>
<dbReference type="PANTHER" id="PTHR37831:SF1">
    <property type="entry name" value="D-RIBOSE PYRANASE"/>
    <property type="match status" value="1"/>
</dbReference>
<dbReference type="Pfam" id="PF05025">
    <property type="entry name" value="RbsD_FucU"/>
    <property type="match status" value="1"/>
</dbReference>
<dbReference type="SUPFAM" id="SSF102546">
    <property type="entry name" value="RbsD-like"/>
    <property type="match status" value="1"/>
</dbReference>
<name>RBSD_ACTP7</name>
<keyword id="KW-0119">Carbohydrate metabolism</keyword>
<keyword id="KW-0963">Cytoplasm</keyword>
<keyword id="KW-0413">Isomerase</keyword>